<sequence length="506" mass="57304">MGEIQGPVRVRFAPSPTGYLHIGGVRTALFNWLFARHHGGQFILRIEDTDEKRYVPGSADDLMASLRWVGIEWDEGPDIGGPYAPYVQSLRHEAGIYRPFVEQLLESGHAYMSFTTEEELERMRAEALAGGVKAFRFRGPERDWSLDRQREMAATGRPYTVRLKTPTEGVTAFRDLVRGGERIEFRNEELYDIVLVKSSGMPVYHLAHLVDDHLMRITHVLRSDEWVASTPYHVLLYQAFGWEMPAFAHLPPILRQDGRGKLSKRTDDVAANRFWERGYLPDAMFNYLALQGWSYDGYTEIMSREELIERFTLDRVQPSPARWNPEKLLDMNGIYIRRLKTEQLADAIAPFLARAGLIGDPPTPDERAYLVQLTPLIHERLKELGEAPELLEFFFREVTLPDPLLLIQKKMDAATTVAALEAAHARLAPLEPWTHDRLEAELRALCEELGLKAGQLFGAIRVAVTGRTVAPPLFDTLVALGKSRTLRRLEAARAALTTHAGANVQS</sequence>
<dbReference type="EC" id="6.1.1.17" evidence="1"/>
<dbReference type="EMBL" id="CP000686">
    <property type="protein sequence ID" value="ABQ90085.1"/>
    <property type="molecule type" value="Genomic_DNA"/>
</dbReference>
<dbReference type="RefSeq" id="WP_011956432.1">
    <property type="nucleotide sequence ID" value="NC_009523.1"/>
</dbReference>
<dbReference type="SMR" id="A5UTY2"/>
<dbReference type="STRING" id="357808.RoseRS_1695"/>
<dbReference type="KEGG" id="rrs:RoseRS_1695"/>
<dbReference type="eggNOG" id="COG0008">
    <property type="taxonomic scope" value="Bacteria"/>
</dbReference>
<dbReference type="eggNOG" id="COG1384">
    <property type="taxonomic scope" value="Bacteria"/>
</dbReference>
<dbReference type="HOGENOM" id="CLU_015768_6_1_0"/>
<dbReference type="OrthoDB" id="9807503at2"/>
<dbReference type="Proteomes" id="UP000006554">
    <property type="component" value="Chromosome"/>
</dbReference>
<dbReference type="GO" id="GO:0005829">
    <property type="term" value="C:cytosol"/>
    <property type="evidence" value="ECO:0007669"/>
    <property type="project" value="TreeGrafter"/>
</dbReference>
<dbReference type="GO" id="GO:0005524">
    <property type="term" value="F:ATP binding"/>
    <property type="evidence" value="ECO:0007669"/>
    <property type="project" value="UniProtKB-UniRule"/>
</dbReference>
<dbReference type="GO" id="GO:0004818">
    <property type="term" value="F:glutamate-tRNA ligase activity"/>
    <property type="evidence" value="ECO:0007669"/>
    <property type="project" value="UniProtKB-UniRule"/>
</dbReference>
<dbReference type="GO" id="GO:0000049">
    <property type="term" value="F:tRNA binding"/>
    <property type="evidence" value="ECO:0007669"/>
    <property type="project" value="InterPro"/>
</dbReference>
<dbReference type="GO" id="GO:0008270">
    <property type="term" value="F:zinc ion binding"/>
    <property type="evidence" value="ECO:0007669"/>
    <property type="project" value="InterPro"/>
</dbReference>
<dbReference type="GO" id="GO:0006424">
    <property type="term" value="P:glutamyl-tRNA aminoacylation"/>
    <property type="evidence" value="ECO:0007669"/>
    <property type="project" value="UniProtKB-UniRule"/>
</dbReference>
<dbReference type="CDD" id="cd00808">
    <property type="entry name" value="GluRS_core"/>
    <property type="match status" value="1"/>
</dbReference>
<dbReference type="FunFam" id="3.40.50.620:FF:000127">
    <property type="entry name" value="Glutamate--tRNA ligase"/>
    <property type="match status" value="1"/>
</dbReference>
<dbReference type="Gene3D" id="1.10.10.350">
    <property type="match status" value="1"/>
</dbReference>
<dbReference type="Gene3D" id="1.10.8.70">
    <property type="entry name" value="Glutamate-tRNA synthetase, class I, anticodon-binding domain 1"/>
    <property type="match status" value="1"/>
</dbReference>
<dbReference type="Gene3D" id="3.40.50.620">
    <property type="entry name" value="HUPs"/>
    <property type="match status" value="1"/>
</dbReference>
<dbReference type="HAMAP" id="MF_00022">
    <property type="entry name" value="Glu_tRNA_synth_type1"/>
    <property type="match status" value="1"/>
</dbReference>
<dbReference type="InterPro" id="IPR045462">
    <property type="entry name" value="aa-tRNA-synth_I_cd-bd"/>
</dbReference>
<dbReference type="InterPro" id="IPR020751">
    <property type="entry name" value="aa-tRNA-synth_I_codon-bd_sub2"/>
</dbReference>
<dbReference type="InterPro" id="IPR001412">
    <property type="entry name" value="aa-tRNA-synth_I_CS"/>
</dbReference>
<dbReference type="InterPro" id="IPR008925">
    <property type="entry name" value="aa_tRNA-synth_I_cd-bd_sf"/>
</dbReference>
<dbReference type="InterPro" id="IPR004527">
    <property type="entry name" value="Glu-tRNA-ligase_bac/mito"/>
</dbReference>
<dbReference type="InterPro" id="IPR020752">
    <property type="entry name" value="Glu-tRNA-synth_I_codon-bd_sub1"/>
</dbReference>
<dbReference type="InterPro" id="IPR000924">
    <property type="entry name" value="Glu/Gln-tRNA-synth"/>
</dbReference>
<dbReference type="InterPro" id="IPR020058">
    <property type="entry name" value="Glu/Gln-tRNA-synth_Ib_cat-dom"/>
</dbReference>
<dbReference type="InterPro" id="IPR049940">
    <property type="entry name" value="GluQ/Sye"/>
</dbReference>
<dbReference type="InterPro" id="IPR033910">
    <property type="entry name" value="GluRS_core"/>
</dbReference>
<dbReference type="InterPro" id="IPR014729">
    <property type="entry name" value="Rossmann-like_a/b/a_fold"/>
</dbReference>
<dbReference type="NCBIfam" id="TIGR00464">
    <property type="entry name" value="gltX_bact"/>
    <property type="match status" value="1"/>
</dbReference>
<dbReference type="PANTHER" id="PTHR43311">
    <property type="entry name" value="GLUTAMATE--TRNA LIGASE"/>
    <property type="match status" value="1"/>
</dbReference>
<dbReference type="PANTHER" id="PTHR43311:SF2">
    <property type="entry name" value="GLUTAMATE--TRNA LIGASE, MITOCHONDRIAL-RELATED"/>
    <property type="match status" value="1"/>
</dbReference>
<dbReference type="Pfam" id="PF19269">
    <property type="entry name" value="Anticodon_2"/>
    <property type="match status" value="1"/>
</dbReference>
<dbReference type="Pfam" id="PF00749">
    <property type="entry name" value="tRNA-synt_1c"/>
    <property type="match status" value="1"/>
</dbReference>
<dbReference type="PRINTS" id="PR00987">
    <property type="entry name" value="TRNASYNTHGLU"/>
</dbReference>
<dbReference type="SUPFAM" id="SSF48163">
    <property type="entry name" value="An anticodon-binding domain of class I aminoacyl-tRNA synthetases"/>
    <property type="match status" value="1"/>
</dbReference>
<dbReference type="SUPFAM" id="SSF52374">
    <property type="entry name" value="Nucleotidylyl transferase"/>
    <property type="match status" value="1"/>
</dbReference>
<dbReference type="PROSITE" id="PS00178">
    <property type="entry name" value="AA_TRNA_LIGASE_I"/>
    <property type="match status" value="1"/>
</dbReference>
<proteinExistence type="inferred from homology"/>
<organism>
    <name type="scientific">Roseiflexus sp. (strain RS-1)</name>
    <dbReference type="NCBI Taxonomy" id="357808"/>
    <lineage>
        <taxon>Bacteria</taxon>
        <taxon>Bacillati</taxon>
        <taxon>Chloroflexota</taxon>
        <taxon>Chloroflexia</taxon>
        <taxon>Chloroflexales</taxon>
        <taxon>Roseiflexineae</taxon>
        <taxon>Roseiflexaceae</taxon>
        <taxon>Roseiflexus</taxon>
    </lineage>
</organism>
<accession>A5UTY2</accession>
<keyword id="KW-0030">Aminoacyl-tRNA synthetase</keyword>
<keyword id="KW-0067">ATP-binding</keyword>
<keyword id="KW-0963">Cytoplasm</keyword>
<keyword id="KW-0436">Ligase</keyword>
<keyword id="KW-0547">Nucleotide-binding</keyword>
<keyword id="KW-0648">Protein biosynthesis</keyword>
<protein>
    <recommendedName>
        <fullName evidence="1">Glutamate--tRNA ligase</fullName>
        <ecNumber evidence="1">6.1.1.17</ecNumber>
    </recommendedName>
    <alternativeName>
        <fullName evidence="1">Glutamyl-tRNA synthetase</fullName>
        <shortName evidence="1">GluRS</shortName>
    </alternativeName>
</protein>
<evidence type="ECO:0000255" key="1">
    <source>
        <dbReference type="HAMAP-Rule" id="MF_00022"/>
    </source>
</evidence>
<feature type="chain" id="PRO_1000074329" description="Glutamate--tRNA ligase">
    <location>
        <begin position="1"/>
        <end position="506"/>
    </location>
</feature>
<feature type="short sequence motif" description="'HIGH' region" evidence="1">
    <location>
        <begin position="14"/>
        <end position="24"/>
    </location>
</feature>
<feature type="short sequence motif" description="'KMSKS' region" evidence="1">
    <location>
        <begin position="261"/>
        <end position="265"/>
    </location>
</feature>
<feature type="binding site" evidence="1">
    <location>
        <position position="264"/>
    </location>
    <ligand>
        <name>ATP</name>
        <dbReference type="ChEBI" id="CHEBI:30616"/>
    </ligand>
</feature>
<name>SYE_ROSS1</name>
<comment type="function">
    <text evidence="1">Catalyzes the attachment of glutamate to tRNA(Glu) in a two-step reaction: glutamate is first activated by ATP to form Glu-AMP and then transferred to the acceptor end of tRNA(Glu).</text>
</comment>
<comment type="catalytic activity">
    <reaction evidence="1">
        <text>tRNA(Glu) + L-glutamate + ATP = L-glutamyl-tRNA(Glu) + AMP + diphosphate</text>
        <dbReference type="Rhea" id="RHEA:23540"/>
        <dbReference type="Rhea" id="RHEA-COMP:9663"/>
        <dbReference type="Rhea" id="RHEA-COMP:9680"/>
        <dbReference type="ChEBI" id="CHEBI:29985"/>
        <dbReference type="ChEBI" id="CHEBI:30616"/>
        <dbReference type="ChEBI" id="CHEBI:33019"/>
        <dbReference type="ChEBI" id="CHEBI:78442"/>
        <dbReference type="ChEBI" id="CHEBI:78520"/>
        <dbReference type="ChEBI" id="CHEBI:456215"/>
        <dbReference type="EC" id="6.1.1.17"/>
    </reaction>
</comment>
<comment type="subunit">
    <text evidence="1">Monomer.</text>
</comment>
<comment type="subcellular location">
    <subcellularLocation>
        <location evidence="1">Cytoplasm</location>
    </subcellularLocation>
</comment>
<comment type="similarity">
    <text evidence="1">Belongs to the class-I aminoacyl-tRNA synthetase family. Glutamate--tRNA ligase type 1 subfamily.</text>
</comment>
<gene>
    <name evidence="1" type="primary">gltX</name>
    <name type="ordered locus">RoseRS_1695</name>
</gene>
<reference key="1">
    <citation type="submission" date="2007-04" db="EMBL/GenBank/DDBJ databases">
        <title>Complete sequence of Roseiflexus sp. RS-1.</title>
        <authorList>
            <consortium name="US DOE Joint Genome Institute"/>
            <person name="Copeland A."/>
            <person name="Lucas S."/>
            <person name="Lapidus A."/>
            <person name="Barry K."/>
            <person name="Detter J.C."/>
            <person name="Glavina del Rio T."/>
            <person name="Hammon N."/>
            <person name="Israni S."/>
            <person name="Dalin E."/>
            <person name="Tice H."/>
            <person name="Pitluck S."/>
            <person name="Chertkov O."/>
            <person name="Brettin T."/>
            <person name="Bruce D."/>
            <person name="Han C."/>
            <person name="Schmutz J."/>
            <person name="Larimer F."/>
            <person name="Land M."/>
            <person name="Hauser L."/>
            <person name="Kyrpides N."/>
            <person name="Mikhailova N."/>
            <person name="Bryant D.A."/>
            <person name="Richardson P."/>
        </authorList>
    </citation>
    <scope>NUCLEOTIDE SEQUENCE [LARGE SCALE GENOMIC DNA]</scope>
    <source>
        <strain>RS-1</strain>
    </source>
</reference>